<reference key="1">
    <citation type="journal article" date="2015" name="PLoS Genet.">
        <title>The dynamic genome and transcriptome of the human fungal pathogen Blastomyces and close relative Emmonsia.</title>
        <authorList>
            <person name="Munoz J.F."/>
            <person name="Gauthier G.M."/>
            <person name="Desjardins C.A."/>
            <person name="Gallo J.E."/>
            <person name="Holder J."/>
            <person name="Sullivan T.D."/>
            <person name="Marty A.J."/>
            <person name="Carmen J.C."/>
            <person name="Chen Z."/>
            <person name="Ding L."/>
            <person name="Gujja S."/>
            <person name="Magrini V."/>
            <person name="Misas E."/>
            <person name="Mitreva M."/>
            <person name="Priest M."/>
            <person name="Saif S."/>
            <person name="Whiston E.A."/>
            <person name="Young S."/>
            <person name="Zeng Q."/>
            <person name="Goldman W.E."/>
            <person name="Mardis E.R."/>
            <person name="Taylor J.W."/>
            <person name="McEwen J.G."/>
            <person name="Clay O.K."/>
            <person name="Klein B.S."/>
            <person name="Cuomo C.A."/>
        </authorList>
    </citation>
    <scope>NUCLEOTIDE SEQUENCE [LARGE SCALE GENOMIC DNA]</scope>
    <source>
        <strain>ER-3 / ATCC MYA-2586</strain>
    </source>
</reference>
<proteinExistence type="inferred from homology"/>
<keyword id="KW-0106">Calcium</keyword>
<keyword id="KW-0255">Endonuclease</keyword>
<keyword id="KW-0378">Hydrolase</keyword>
<keyword id="KW-0472">Membrane</keyword>
<keyword id="KW-0479">Metal-binding</keyword>
<keyword id="KW-0496">Mitochondrion</keyword>
<keyword id="KW-0540">Nuclease</keyword>
<keyword id="KW-0812">Transmembrane</keyword>
<keyword id="KW-1133">Transmembrane helix</keyword>
<dbReference type="EC" id="3.1.-.-"/>
<dbReference type="EMBL" id="EQ999974">
    <property type="protein sequence ID" value="EEQ86376.1"/>
    <property type="molecule type" value="Genomic_DNA"/>
</dbReference>
<dbReference type="STRING" id="559297.C5GB89"/>
<dbReference type="VEuPathDB" id="FungiDB:BDCG_01496"/>
<dbReference type="eggNOG" id="ENOG502S1U4">
    <property type="taxonomic scope" value="Eukaryota"/>
</dbReference>
<dbReference type="HOGENOM" id="CLU_046484_0_1_1"/>
<dbReference type="GO" id="GO:0016020">
    <property type="term" value="C:membrane"/>
    <property type="evidence" value="ECO:0007669"/>
    <property type="project" value="UniProtKB-SubCell"/>
</dbReference>
<dbReference type="GO" id="GO:0005739">
    <property type="term" value="C:mitochondrion"/>
    <property type="evidence" value="ECO:0007669"/>
    <property type="project" value="UniProtKB-SubCell"/>
</dbReference>
<dbReference type="GO" id="GO:0004519">
    <property type="term" value="F:endonuclease activity"/>
    <property type="evidence" value="ECO:0007669"/>
    <property type="project" value="UniProtKB-KW"/>
</dbReference>
<dbReference type="GO" id="GO:0046872">
    <property type="term" value="F:metal ion binding"/>
    <property type="evidence" value="ECO:0007669"/>
    <property type="project" value="UniProtKB-KW"/>
</dbReference>
<dbReference type="FunFam" id="2.40.50.90:FF:000029">
    <property type="entry name" value="Probable endonuclease lcl3"/>
    <property type="match status" value="1"/>
</dbReference>
<dbReference type="Gene3D" id="2.40.50.90">
    <property type="match status" value="1"/>
</dbReference>
<dbReference type="InterPro" id="IPR035437">
    <property type="entry name" value="SNase_OB-fold_sf"/>
</dbReference>
<dbReference type="InterPro" id="IPR016071">
    <property type="entry name" value="Staphylococal_nuclease_OB-fold"/>
</dbReference>
<dbReference type="PANTHER" id="PTHR12302">
    <property type="entry name" value="EBNA2 BINDING PROTEIN P100"/>
    <property type="match status" value="1"/>
</dbReference>
<dbReference type="PANTHER" id="PTHR12302:SF3">
    <property type="entry name" value="SERINE_THREONINE-PROTEIN KINASE 31"/>
    <property type="match status" value="1"/>
</dbReference>
<dbReference type="Pfam" id="PF00565">
    <property type="entry name" value="SNase"/>
    <property type="match status" value="1"/>
</dbReference>
<dbReference type="SMART" id="SM00318">
    <property type="entry name" value="SNc"/>
    <property type="match status" value="1"/>
</dbReference>
<dbReference type="SUPFAM" id="SSF50199">
    <property type="entry name" value="Staphylococcal nuclease"/>
    <property type="match status" value="1"/>
</dbReference>
<dbReference type="PROSITE" id="PS50830">
    <property type="entry name" value="TNASE_3"/>
    <property type="match status" value="1"/>
</dbReference>
<comment type="subcellular location">
    <subcellularLocation>
        <location>Mitochondrion</location>
    </subcellularLocation>
    <subcellularLocation>
        <location evidence="1">Membrane</location>
        <topology evidence="1">Single-pass membrane protein</topology>
    </subcellularLocation>
</comment>
<comment type="similarity">
    <text evidence="5">Belongs to the LCL3 family.</text>
</comment>
<sequence length="303" mass="33880">MPWLFWSSGSQRQMSSNENNTDKTTPIVGETNSSSSSTQCANCSTPITTPPTDTSNQVNPPHQTHRPPALDWNASLATRDWAGDFKDPRNLIPTLLLTSGILFCVRIHRKYLRRIPVATSISPTYFHKRSIFGRVTSVGDGDNFRLFHTPGGRLAGWEWLPFRKVPTAKKELKDRTIHIRLAGVDAPELPHFGRPAQPYSDAAHTWLTTYLLNRRVRAYVYRQDQYGRVVATVYVRRWPFPFIRRDVGLQMLRAGLAPVNEAKTGVDFGGEGTGRRLPPRGGKGEEPPEGDLEGEGGFRGGES</sequence>
<organism>
    <name type="scientific">Ajellomyces dermatitidis (strain ER-3 / ATCC MYA-2586)</name>
    <name type="common">Blastomyces dermatitidis</name>
    <dbReference type="NCBI Taxonomy" id="559297"/>
    <lineage>
        <taxon>Eukaryota</taxon>
        <taxon>Fungi</taxon>
        <taxon>Dikarya</taxon>
        <taxon>Ascomycota</taxon>
        <taxon>Pezizomycotina</taxon>
        <taxon>Eurotiomycetes</taxon>
        <taxon>Eurotiomycetidae</taxon>
        <taxon>Onygenales</taxon>
        <taxon>Ajellomycetaceae</taxon>
        <taxon>Blastomyces</taxon>
    </lineage>
</organism>
<feature type="chain" id="PRO_0000408638" description="Probable endonuclease LCL3">
    <location>
        <begin position="1"/>
        <end position="303"/>
    </location>
</feature>
<feature type="transmembrane region" description="Helical" evidence="2">
    <location>
        <begin position="91"/>
        <end position="107"/>
    </location>
</feature>
<feature type="domain" description="TNase-like" evidence="3">
    <location>
        <begin position="129"/>
        <end position="290"/>
    </location>
</feature>
<feature type="region of interest" description="Disordered" evidence="4">
    <location>
        <begin position="1"/>
        <end position="69"/>
    </location>
</feature>
<feature type="region of interest" description="Disordered" evidence="4">
    <location>
        <begin position="264"/>
        <end position="303"/>
    </location>
</feature>
<feature type="compositionally biased region" description="Polar residues" evidence="4">
    <location>
        <begin position="7"/>
        <end position="24"/>
    </location>
</feature>
<feature type="compositionally biased region" description="Low complexity" evidence="4">
    <location>
        <begin position="45"/>
        <end position="54"/>
    </location>
</feature>
<feature type="active site" evidence="3">
    <location>
        <position position="180"/>
    </location>
</feature>
<feature type="active site" evidence="3">
    <location>
        <position position="188"/>
    </location>
</feature>
<feature type="active site" evidence="3">
    <location>
        <position position="228"/>
    </location>
</feature>
<feature type="binding site" evidence="3">
    <location>
        <position position="185"/>
    </location>
    <ligand>
        <name>Ca(2+)</name>
        <dbReference type="ChEBI" id="CHEBI:29108"/>
    </ligand>
</feature>
<protein>
    <recommendedName>
        <fullName>Probable endonuclease LCL3</fullName>
        <ecNumber>3.1.-.-</ecNumber>
    </recommendedName>
</protein>
<gene>
    <name type="primary">LCL3</name>
    <name type="ORF">BDCG_01496</name>
</gene>
<evidence type="ECO:0000250" key="1"/>
<evidence type="ECO:0000255" key="2"/>
<evidence type="ECO:0000255" key="3">
    <source>
        <dbReference type="PROSITE-ProRule" id="PRU00272"/>
    </source>
</evidence>
<evidence type="ECO:0000256" key="4">
    <source>
        <dbReference type="SAM" id="MobiDB-lite"/>
    </source>
</evidence>
<evidence type="ECO:0000305" key="5"/>
<name>LCL3_AJEDR</name>
<accession>C5GB89</accession>